<evidence type="ECO:0000250" key="1"/>
<evidence type="ECO:0000250" key="2">
    <source>
        <dbReference type="UniProtKB" id="P04692"/>
    </source>
</evidence>
<evidence type="ECO:0000250" key="3">
    <source>
        <dbReference type="UniProtKB" id="P06753"/>
    </source>
</evidence>
<evidence type="ECO:0000250" key="4">
    <source>
        <dbReference type="UniProtKB" id="P58774"/>
    </source>
</evidence>
<evidence type="ECO:0000250" key="5">
    <source>
        <dbReference type="UniProtKB" id="P58775"/>
    </source>
</evidence>
<evidence type="ECO:0000250" key="6">
    <source>
        <dbReference type="UniProtKB" id="P58776"/>
    </source>
</evidence>
<evidence type="ECO:0000256" key="7">
    <source>
        <dbReference type="SAM" id="MobiDB-lite"/>
    </source>
</evidence>
<evidence type="ECO:0000269" key="8">
    <source>
    </source>
</evidence>
<evidence type="ECO:0000269" key="9">
    <source>
    </source>
</evidence>
<evidence type="ECO:0000269" key="10">
    <source>
    </source>
</evidence>
<evidence type="ECO:0000269" key="11">
    <source>
    </source>
</evidence>
<evidence type="ECO:0000269" key="12">
    <source>
    </source>
</evidence>
<evidence type="ECO:0000269" key="13">
    <source>
    </source>
</evidence>
<evidence type="ECO:0000269" key="14">
    <source>
    </source>
</evidence>
<evidence type="ECO:0000269" key="15">
    <source>
    </source>
</evidence>
<evidence type="ECO:0000269" key="16">
    <source>
    </source>
</evidence>
<evidence type="ECO:0000269" key="17">
    <source>
    </source>
</evidence>
<evidence type="ECO:0000269" key="18">
    <source>
    </source>
</evidence>
<evidence type="ECO:0000269" key="19">
    <source ref="10"/>
</evidence>
<evidence type="ECO:0000303" key="20">
    <source>
    </source>
</evidence>
<evidence type="ECO:0000303" key="21">
    <source>
    </source>
</evidence>
<evidence type="ECO:0000303" key="22">
    <source>
    </source>
</evidence>
<evidence type="ECO:0000303" key="23">
    <source ref="4"/>
</evidence>
<evidence type="ECO:0000305" key="24"/>
<accession>P07951</accession>
<accession>A6NM85</accession>
<accession>P06468</accession>
<accession>Q13894</accession>
<accession>Q53FM4</accession>
<accession>Q5TCU4</accession>
<accession>Q5TCU7</accession>
<accession>Q9UH67</accession>
<gene>
    <name type="primary">TPM2</name>
    <name type="synonym">TMSB</name>
</gene>
<comment type="function">
    <text evidence="4 5">Binds to actin filaments in muscle and non-muscle cells. Plays a central role, in association with the troponin complex, in the calcium dependent regulation of vertebrate striated muscle contraction. Smooth muscle contraction is regulated by interaction with caldesmon. In non-muscle cells is implicated in stabilizing cytoskeleton actin filaments. The non-muscle isoform may have a role in agonist-mediated receptor internalization.</text>
</comment>
<comment type="subunit">
    <text evidence="2">Homodimer. Heterodimer of an alpha (TPM1, TPM3 or TPM4) and a beta (TPM2) chain.</text>
</comment>
<comment type="interaction">
    <interactant intactId="EBI-352633">
        <id>P07951</id>
    </interactant>
    <interactant intactId="EBI-351158">
        <id>P09493</id>
        <label>TPM1</label>
    </interactant>
    <organismsDiffer>false</organismsDiffer>
    <experiments>3</experiments>
</comment>
<comment type="interaction">
    <interactant intactId="EBI-10977815">
        <id>P07951-2</id>
    </interactant>
    <interactant intactId="EBI-11096309">
        <id>Q9NYB9-2</id>
        <label>ABI2</label>
    </interactant>
    <organismsDiffer>false</organismsDiffer>
    <experiments>3</experiments>
</comment>
<comment type="interaction">
    <interactant intactId="EBI-10977815">
        <id>P07951-2</id>
    </interactant>
    <interactant intactId="EBI-2513774">
        <id>O95363</id>
        <label>FARS2</label>
    </interactant>
    <organismsDiffer>false</organismsDiffer>
    <experiments>3</experiments>
</comment>
<comment type="interaction">
    <interactant intactId="EBI-10977815">
        <id>P07951-2</id>
    </interactant>
    <interactant intactId="EBI-6165891">
        <id>Q14696</id>
        <label>MESD</label>
    </interactant>
    <organismsDiffer>false</organismsDiffer>
    <experiments>3</experiments>
</comment>
<comment type="interaction">
    <interactant intactId="EBI-10977815">
        <id>P07951-2</id>
    </interactant>
    <interactant intactId="EBI-995714">
        <id>Q9Y605</id>
        <label>MRFAP1</label>
    </interactant>
    <organismsDiffer>false</organismsDiffer>
    <experiments>3</experiments>
</comment>
<comment type="interaction">
    <interactant intactId="EBI-10977815">
        <id>P07951-2</id>
    </interactant>
    <interactant intactId="EBI-296723">
        <id>O95295</id>
        <label>SNAPIN</label>
    </interactant>
    <organismsDiffer>false</organismsDiffer>
    <experiments>3</experiments>
</comment>
<comment type="interaction">
    <interactant intactId="EBI-10977815">
        <id>P07951-2</id>
    </interactant>
    <interactant intactId="EBI-990792">
        <id>P00441</id>
        <label>SOD1</label>
    </interactant>
    <organismsDiffer>false</organismsDiffer>
    <experiments>3</experiments>
</comment>
<comment type="interaction">
    <interactant intactId="EBI-10977815">
        <id>P07951-2</id>
    </interactant>
    <interactant intactId="EBI-1245626">
        <id>P0C1Z6</id>
        <label>TFPT</label>
    </interactant>
    <organismsDiffer>false</organismsDiffer>
    <experiments>3</experiments>
</comment>
<comment type="interaction">
    <interactant intactId="EBI-10977815">
        <id>P07951-2</id>
    </interactant>
    <interactant intactId="EBI-10977815">
        <id>P07951-2</id>
        <label>TPM2</label>
    </interactant>
    <organismsDiffer>false</organismsDiffer>
    <experiments>3</experiments>
</comment>
<comment type="interaction">
    <interactant intactId="EBI-10977815">
        <id>P07951-2</id>
    </interactant>
    <interactant intactId="EBI-12068564">
        <id>Q9UJW7</id>
        <label>ZNF229</label>
    </interactant>
    <organismsDiffer>false</organismsDiffer>
    <experiments>3</experiments>
</comment>
<comment type="interaction">
    <interactant intactId="EBI-10977815">
        <id>P07951-2</id>
    </interactant>
    <interactant intactId="EBI-4395669">
        <id>Q6ZNG0</id>
        <label>ZNF620</label>
    </interactant>
    <organismsDiffer>false</organismsDiffer>
    <experiments>3</experiments>
</comment>
<comment type="interaction">
    <interactant intactId="EBI-10977815">
        <id>P07951-2</id>
    </interactant>
    <interactant intactId="EBI-3925400">
        <id>A8K8V0</id>
        <label>ZNF785</label>
    </interactant>
    <organismsDiffer>false</organismsDiffer>
    <experiments>3</experiments>
</comment>
<comment type="subcellular location">
    <subcellularLocation>
        <location evidence="5">Cytoplasm</location>
        <location evidence="5">Cytoskeleton</location>
    </subcellularLocation>
    <text evidence="5">Associates with F-actin stress fibers.</text>
</comment>
<comment type="alternative products">
    <event type="alternative splicing"/>
    <isoform>
        <id>P07951-1</id>
        <name>1</name>
        <name>Skeletal muscle</name>
        <sequence type="displayed"/>
    </isoform>
    <isoform>
        <id>P07951-2</id>
        <name>2</name>
        <name>non-muscle</name>
        <name>Fibroblast TM36</name>
        <name>Epithelial TMe1</name>
        <sequence type="described" ref="VSP_006595 VSP_006596"/>
    </isoform>
    <isoform>
        <id>P07951-3</id>
        <name>3</name>
        <name>non-muscle</name>
        <sequence type="described" ref="VSP_006594 VSP_006595 VSP_006596"/>
    </isoform>
</comment>
<comment type="tissue specificity">
    <text evidence="19">Present in primary breast cancer tissue, absent from normal breast tissue.</text>
</comment>
<comment type="domain">
    <text>The molecule is in a coiled coil structure that is formed by 2 polypeptide chains. The sequence exhibits a prominent seven-residues periodicity.</text>
</comment>
<comment type="PTM">
    <text evidence="1">Phosphorylated on Ser-61 by PIK3CG. Phosphorylation on Ser-61 is required for ADRB2 internalization (By similarity).</text>
</comment>
<comment type="mass spectrometry">
    <molecule>Isoform 1</molecule>
</comment>
<comment type="mass spectrometry">
    <molecule>Isoform 2</molecule>
    <text>The measured range is 1-284.</text>
</comment>
<comment type="disease" evidence="8 12 13 14 15 17">
    <disease id="DI-02035">
        <name>Congenital myopathy 23</name>
        <acronym>CMYO23</acronym>
        <description>An autosomal dominant muscular disorder characterized clinically by hypotonia and muscle weakness, and a static or slowly progressive clinical course. Disease onset ranges from birth to childhood. Histologic examination of muscle fibers shows various anomalies including fiber type disproportion, an irregular myofibrillar network, abnormal thread-like or rod-shaped structures, and cap-like structures which are well demarcated and peripherally located under the sarcolemma with abnormal accumulation of sarcomeric proteins.</description>
        <dbReference type="MIM" id="609285"/>
    </disease>
    <text>The disease is caused by variants affecting the gene represented in this entry.</text>
</comment>
<comment type="disease" evidence="10 17">
    <disease id="DI-01491">
        <name>Arthrogryposis, distal, 1A</name>
        <acronym>DA1A</acronym>
        <description>A form of distal arthrogryposis, a disease characterized by congenital joint contractures that mainly involve two or more distal parts of the limbs, in the absence of a primary neurological or muscle disease. Distal arthrogryposis type 1 is characterized largely by camptodactyly and clubfoot. Hypoplasia and/or absence of some interphalangeal creases is common. The shoulders and hips are less frequently affected.</description>
        <dbReference type="MIM" id="108120"/>
    </disease>
    <text>The disease is caused by variants affecting the gene represented in this entry.</text>
</comment>
<comment type="disease" evidence="11 16 18">
    <disease id="DI-05559">
        <name>Arthrogryposis, distal, 2B4</name>
        <acronym>DA2B4</acronym>
        <description>A form of distal arthrogryposis, a disease characterized by congenital joint contractures that mainly involve two or more distal parts of the limbs, in the absence of a primary neurological or muscle disease. Distal arthrogryposis type 2 is characterized by contractures of the hands and feet, and a distinctive face characterized by prominent nasolabial folds, small mouth and downslanting palpebral fissures.</description>
        <dbReference type="MIM" id="108120"/>
    </disease>
    <text>The disease is caused by variants affecting the gene represented in this entry.</text>
</comment>
<comment type="similarity">
    <text evidence="24">Belongs to the tropomyosin family.</text>
</comment>
<reference key="1">
    <citation type="journal article" date="1985" name="Proc. Natl. Acad. Sci. U.S.A.">
        <title>A muscle-type tropomyosin in human fibroblasts: evidence for expression by an alternative RNA splicing mechanism.</title>
        <authorList>
            <person name="MacLeod A.R."/>
            <person name="Houlker C."/>
            <person name="Reinach F.C."/>
            <person name="Smillie L.B."/>
            <person name="Talbot K."/>
            <person name="Modi G."/>
            <person name="Walsh F.S."/>
        </authorList>
    </citation>
    <scope>NUCLEOTIDE SEQUENCE [MRNA] (ISOFORMS 1 AND 2)</scope>
    <source>
        <tissue>Fibroblast</tissue>
    </source>
</reference>
<reference key="2">
    <citation type="journal article" date="1988" name="Nucleic Acids Res.">
        <title>Complete nucleotide sequence of the adult skeletal isoform of human skeletal muscle beta-tropomyosin.</title>
        <authorList>
            <person name="Widada J.S."/>
            <person name="Ferraz C."/>
            <person name="Capony J.-P."/>
            <person name="Liautard J.-P."/>
        </authorList>
    </citation>
    <scope>NUCLEOTIDE SEQUENCE [MRNA] (ISOFORM 1)</scope>
</reference>
<reference key="3">
    <citation type="journal article" date="1991" name="Biochem. Biophys. Res. Commun.">
        <title>A cDNA encoding a muscle-type tropomyosin cloned from a human epithelial cell line: identity with human fibroblast tropomyosin TM1.</title>
        <authorList>
            <person name="Prasad G.L."/>
            <person name="Meissner S."/>
            <person name="Sheer D.G."/>
            <person name="Cooper H.L."/>
        </authorList>
    </citation>
    <scope>NUCLEOTIDE SEQUENCE [MRNA] (ISOFORM 2)</scope>
    <source>
        <tissue>Colon epithelium</tissue>
    </source>
</reference>
<reference key="4">
    <citation type="submission" date="2005-04" db="EMBL/GenBank/DDBJ databases">
        <authorList>
            <person name="Suzuki Y."/>
            <person name="Sugano S."/>
            <person name="Totoki Y."/>
            <person name="Toyoda A."/>
            <person name="Takeda T."/>
            <person name="Sakaki Y."/>
            <person name="Tanaka A."/>
            <person name="Yokoyama S."/>
        </authorList>
    </citation>
    <scope>NUCLEOTIDE SEQUENCE [LARGE SCALE MRNA] (ISOFORM 2)</scope>
    <source>
        <tissue>Gastric mucosa</tissue>
    </source>
</reference>
<reference key="5">
    <citation type="journal article" date="2004" name="Nature">
        <title>DNA sequence and analysis of human chromosome 9.</title>
        <authorList>
            <person name="Humphray S.J."/>
            <person name="Oliver K."/>
            <person name="Hunt A.R."/>
            <person name="Plumb R.W."/>
            <person name="Loveland J.E."/>
            <person name="Howe K.L."/>
            <person name="Andrews T.D."/>
            <person name="Searle S."/>
            <person name="Hunt S.E."/>
            <person name="Scott C.E."/>
            <person name="Jones M.C."/>
            <person name="Ainscough R."/>
            <person name="Almeida J.P."/>
            <person name="Ambrose K.D."/>
            <person name="Ashwell R.I.S."/>
            <person name="Babbage A.K."/>
            <person name="Babbage S."/>
            <person name="Bagguley C.L."/>
            <person name="Bailey J."/>
            <person name="Banerjee R."/>
            <person name="Barker D.J."/>
            <person name="Barlow K.F."/>
            <person name="Bates K."/>
            <person name="Beasley H."/>
            <person name="Beasley O."/>
            <person name="Bird C.P."/>
            <person name="Bray-Allen S."/>
            <person name="Brown A.J."/>
            <person name="Brown J.Y."/>
            <person name="Burford D."/>
            <person name="Burrill W."/>
            <person name="Burton J."/>
            <person name="Carder C."/>
            <person name="Carter N.P."/>
            <person name="Chapman J.C."/>
            <person name="Chen Y."/>
            <person name="Clarke G."/>
            <person name="Clark S.Y."/>
            <person name="Clee C.M."/>
            <person name="Clegg S."/>
            <person name="Collier R.E."/>
            <person name="Corby N."/>
            <person name="Crosier M."/>
            <person name="Cummings A.T."/>
            <person name="Davies J."/>
            <person name="Dhami P."/>
            <person name="Dunn M."/>
            <person name="Dutta I."/>
            <person name="Dyer L.W."/>
            <person name="Earthrowl M.E."/>
            <person name="Faulkner L."/>
            <person name="Fleming C.J."/>
            <person name="Frankish A."/>
            <person name="Frankland J.A."/>
            <person name="French L."/>
            <person name="Fricker D.G."/>
            <person name="Garner P."/>
            <person name="Garnett J."/>
            <person name="Ghori J."/>
            <person name="Gilbert J.G.R."/>
            <person name="Glison C."/>
            <person name="Grafham D.V."/>
            <person name="Gribble S."/>
            <person name="Griffiths C."/>
            <person name="Griffiths-Jones S."/>
            <person name="Grocock R."/>
            <person name="Guy J."/>
            <person name="Hall R.E."/>
            <person name="Hammond S."/>
            <person name="Harley J.L."/>
            <person name="Harrison E.S.I."/>
            <person name="Hart E.A."/>
            <person name="Heath P.D."/>
            <person name="Henderson C.D."/>
            <person name="Hopkins B.L."/>
            <person name="Howard P.J."/>
            <person name="Howden P.J."/>
            <person name="Huckle E."/>
            <person name="Johnson C."/>
            <person name="Johnson D."/>
            <person name="Joy A.A."/>
            <person name="Kay M."/>
            <person name="Keenan S."/>
            <person name="Kershaw J.K."/>
            <person name="Kimberley A.M."/>
            <person name="King A."/>
            <person name="Knights A."/>
            <person name="Laird G.K."/>
            <person name="Langford C."/>
            <person name="Lawlor S."/>
            <person name="Leongamornlert D.A."/>
            <person name="Leversha M."/>
            <person name="Lloyd C."/>
            <person name="Lloyd D.M."/>
            <person name="Lovell J."/>
            <person name="Martin S."/>
            <person name="Mashreghi-Mohammadi M."/>
            <person name="Matthews L."/>
            <person name="McLaren S."/>
            <person name="McLay K.E."/>
            <person name="McMurray A."/>
            <person name="Milne S."/>
            <person name="Nickerson T."/>
            <person name="Nisbett J."/>
            <person name="Nordsiek G."/>
            <person name="Pearce A.V."/>
            <person name="Peck A.I."/>
            <person name="Porter K.M."/>
            <person name="Pandian R."/>
            <person name="Pelan S."/>
            <person name="Phillimore B."/>
            <person name="Povey S."/>
            <person name="Ramsey Y."/>
            <person name="Rand V."/>
            <person name="Scharfe M."/>
            <person name="Sehra H.K."/>
            <person name="Shownkeen R."/>
            <person name="Sims S.K."/>
            <person name="Skuce C.D."/>
            <person name="Smith M."/>
            <person name="Steward C.A."/>
            <person name="Swarbreck D."/>
            <person name="Sycamore N."/>
            <person name="Tester J."/>
            <person name="Thorpe A."/>
            <person name="Tracey A."/>
            <person name="Tromans A."/>
            <person name="Thomas D.W."/>
            <person name="Wall M."/>
            <person name="Wallis J.M."/>
            <person name="West A.P."/>
            <person name="Whitehead S.L."/>
            <person name="Willey D.L."/>
            <person name="Williams S.A."/>
            <person name="Wilming L."/>
            <person name="Wray P.W."/>
            <person name="Young L."/>
            <person name="Ashurst J.L."/>
            <person name="Coulson A."/>
            <person name="Blocker H."/>
            <person name="Durbin R.M."/>
            <person name="Sulston J.E."/>
            <person name="Hubbard T."/>
            <person name="Jackson M.J."/>
            <person name="Bentley D.R."/>
            <person name="Beck S."/>
            <person name="Rogers J."/>
            <person name="Dunham I."/>
        </authorList>
    </citation>
    <scope>NUCLEOTIDE SEQUENCE [LARGE SCALE GENOMIC DNA]</scope>
</reference>
<reference key="6">
    <citation type="submission" date="2005-09" db="EMBL/GenBank/DDBJ databases">
        <authorList>
            <person name="Mural R.J."/>
            <person name="Istrail S."/>
            <person name="Sutton G.G."/>
            <person name="Florea L."/>
            <person name="Halpern A.L."/>
            <person name="Mobarry C.M."/>
            <person name="Lippert R."/>
            <person name="Walenz B."/>
            <person name="Shatkay H."/>
            <person name="Dew I."/>
            <person name="Miller J.R."/>
            <person name="Flanigan M.J."/>
            <person name="Edwards N.J."/>
            <person name="Bolanos R."/>
            <person name="Fasulo D."/>
            <person name="Halldorsson B.V."/>
            <person name="Hannenhalli S."/>
            <person name="Turner R."/>
            <person name="Yooseph S."/>
            <person name="Lu F."/>
            <person name="Nusskern D.R."/>
            <person name="Shue B.C."/>
            <person name="Zheng X.H."/>
            <person name="Zhong F."/>
            <person name="Delcher A.L."/>
            <person name="Huson D.H."/>
            <person name="Kravitz S.A."/>
            <person name="Mouchard L."/>
            <person name="Reinert K."/>
            <person name="Remington K.A."/>
            <person name="Clark A.G."/>
            <person name="Waterman M.S."/>
            <person name="Eichler E.E."/>
            <person name="Adams M.D."/>
            <person name="Hunkapiller M.W."/>
            <person name="Myers E.W."/>
            <person name="Venter J.C."/>
        </authorList>
    </citation>
    <scope>NUCLEOTIDE SEQUENCE [LARGE SCALE GENOMIC DNA]</scope>
</reference>
<reference key="7">
    <citation type="journal article" date="2004" name="Genome Res.">
        <title>The status, quality, and expansion of the NIH full-length cDNA project: the Mammalian Gene Collection (MGC).</title>
        <authorList>
            <consortium name="The MGC Project Team"/>
        </authorList>
    </citation>
    <scope>NUCLEOTIDE SEQUENCE [LARGE SCALE MRNA] (ISOFORM 2)</scope>
    <source>
        <tissue>Pancreas</tissue>
    </source>
</reference>
<reference key="8">
    <citation type="submission" date="1999-11" db="EMBL/GenBank/DDBJ databases">
        <title>Nucleotide sequence of the human TPM2 gene.</title>
        <authorList>
            <person name="Ben-Yosef T."/>
            <person name="Francomano C.A."/>
        </authorList>
    </citation>
    <scope>NUCLEOTIDE SEQUENCE [GENOMIC DNA] OF 1-257 (ISOFORM 2)</scope>
</reference>
<reference key="9">
    <citation type="journal article" date="1990" name="J. Biol. Chem.">
        <title>A nonmuscle tropomyosin is encoded by the smooth/skeletal beta-tropomyosin gene and its RNA is transcribed from an internal promoter.</title>
        <authorList>
            <person name="Libri D."/>
            <person name="Mouly V."/>
            <person name="Lemonnier M."/>
            <person name="Fiszman M.Y."/>
        </authorList>
    </citation>
    <scope>NUCLEOTIDE SEQUENCE [GENOMIC DNA] OF 1-44 (ISOFORM 3)</scope>
</reference>
<reference key="10">
    <citation type="journal article" date="2007" name="Sudan J. Med. Sci.">
        <title>Protein content study revealed the presence of isoform 2 of beta-tropomyosin in primary breast cancer tissues from Sudanese patients.</title>
        <authorList>
            <person name="Ahamed M.E."/>
            <person name="Mohamed A.O."/>
            <person name="Ahmed M.E."/>
            <person name="Sirinuch B."/>
            <person name="Surasak J."/>
        </authorList>
    </citation>
    <scope>PROTEIN SEQUENCE OF 36-48; 52-65; 141-149 AND 206-217 (ISOFORM 2)</scope>
    <scope>TISSUE SPECIFICITY</scope>
    <source>
        <tissue>Mammary cancer</tissue>
    </source>
</reference>
<reference key="11">
    <citation type="journal article" date="2002" name="Proteomics">
        <title>Cluster analysis of an extensive human breast cancer cell line protein expression map database.</title>
        <authorList>
            <person name="Harris R.A."/>
            <person name="Yang A."/>
            <person name="Stein R.C."/>
            <person name="Lucy K."/>
            <person name="Brusten L."/>
            <person name="Herath A."/>
            <person name="Parekh R."/>
            <person name="Waterfield M.D."/>
            <person name="O'Hare M.J."/>
            <person name="Neville M.A."/>
            <person name="Page M.J."/>
            <person name="Zvelebil M.J."/>
        </authorList>
    </citation>
    <scope>MASS SPECTROMETRY</scope>
    <source>
        <tissue>Mammary cancer</tissue>
    </source>
</reference>
<reference key="12">
    <citation type="journal article" date="2011" name="BMC Syst. Biol.">
        <title>Initial characterization of the human central proteome.</title>
        <authorList>
            <person name="Burkard T.R."/>
            <person name="Planyavsky M."/>
            <person name="Kaupe I."/>
            <person name="Breitwieser F.P."/>
            <person name="Buerckstuemmer T."/>
            <person name="Bennett K.L."/>
            <person name="Superti-Furga G."/>
            <person name="Colinge J."/>
        </authorList>
    </citation>
    <scope>IDENTIFICATION BY MASS SPECTROMETRY [LARGE SCALE ANALYSIS]</scope>
</reference>
<reference key="13">
    <citation type="journal article" date="2014" name="J. Proteomics">
        <title>An enzyme assisted RP-RPLC approach for in-depth analysis of human liver phosphoproteome.</title>
        <authorList>
            <person name="Bian Y."/>
            <person name="Song C."/>
            <person name="Cheng K."/>
            <person name="Dong M."/>
            <person name="Wang F."/>
            <person name="Huang J."/>
            <person name="Sun D."/>
            <person name="Wang L."/>
            <person name="Ye M."/>
            <person name="Zou H."/>
        </authorList>
    </citation>
    <scope>IDENTIFICATION BY MASS SPECTROMETRY [LARGE SCALE ANALYSIS]</scope>
    <source>
        <tissue>Liver</tissue>
    </source>
</reference>
<reference key="14">
    <citation type="journal article" date="2002" name="Neuromuscul. Disord.">
        <title>Mutations in the beta-tropomyosin (TPM2) gene -- a rare cause of nemaline myopathy.</title>
        <authorList>
            <person name="Donner K."/>
            <person name="Ollikainen M."/>
            <person name="Ridanpaeae M."/>
            <person name="Christen H.J."/>
            <person name="Goebel H.H."/>
            <person name="de Visser M."/>
            <person name="Pelin K."/>
            <person name="Wallgren-Pettersson C."/>
        </authorList>
    </citation>
    <scope>VARIANTS CMYO23 ALA-117 AND PRO-147</scope>
</reference>
<reference key="15">
    <citation type="journal article" date="2003" name="Am. J. Hum. Genet.">
        <title>Mutations in genes encoding fast-twitch contractile proteins cause distal arthrogryposis syndromes.</title>
        <authorList>
            <person name="Sung S.S."/>
            <person name="Brassington A.-M.E."/>
            <person name="Grannatt K."/>
            <person name="Rutherford A."/>
            <person name="Whitby F.G."/>
            <person name="Krakowiak P.A."/>
            <person name="Jorde L.B."/>
            <person name="Carey J.C."/>
            <person name="Bamshad M."/>
        </authorList>
    </citation>
    <scope>VARIANT DA1A GLY-91</scope>
</reference>
<reference key="16">
    <citation type="journal article" date="2007" name="Arch. Neurol.">
        <title>Congenital myopathy with nemaline rods and cap structures caused by a mutation in the beta-tropomyosin gene (TPM2).</title>
        <authorList>
            <person name="Tajsharghi H."/>
            <person name="Ohlsson M."/>
            <person name="Lindberg C."/>
            <person name="Oldfors A."/>
        </authorList>
    </citation>
    <scope>VARIANT CMYO23 LYS-41</scope>
</reference>
<reference key="17">
    <citation type="journal article" date="2007" name="Neurology">
        <title>Distal arthrogryposis and muscle weakness associated with a beta-tropomyosin mutation.</title>
        <authorList>
            <person name="Tajsharghi H."/>
            <person name="Kimber E."/>
            <person name="Holmgren D."/>
            <person name="Tulinius M."/>
            <person name="Oldfors A."/>
        </authorList>
    </citation>
    <scope>VARIANT DA2B4 TRP-133</scope>
</reference>
<reference key="18">
    <citation type="journal article" date="2007" name="Neuromuscul. Disord.">
        <title>Cap disease caused by heterozygous deletion of the beta-tropomyosin gene TPM2.</title>
        <authorList>
            <person name="Lehtokari V.L."/>
            <person name="Ceuterick-de Groote C."/>
            <person name="de Jonghe P."/>
            <person name="Marttila M."/>
            <person name="Laing N.G."/>
            <person name="Pelin K."/>
            <person name="Wallgren-Pettersson C."/>
        </authorList>
    </citation>
    <scope>VARIANT CMYO23 GLU-139 DEL</scope>
</reference>
<reference key="19">
    <citation type="journal article" date="2008" name="Neurology">
        <title>New morphologic and genetic findings in cap disease associated with beta-tropomyosin (TPM2) mutations.</title>
        <authorList>
            <person name="Ohlsson M."/>
            <person name="Quijano-Roy S."/>
            <person name="Darin N."/>
            <person name="Brochier G."/>
            <person name="Lacene E."/>
            <person name="Avila-Smirnow D."/>
            <person name="Fardeau M."/>
            <person name="Oldfors A."/>
            <person name="Tajsharghi H."/>
        </authorList>
    </citation>
    <scope>VARIANTS CMYO23 LYS-49 DEL; GLY-52 INS AND LYS-202</scope>
</reference>
<reference key="20">
    <citation type="journal article" date="2009" name="Neuromuscul. Disord.">
        <title>Cap disease due to mutation of the beta-tropomyosin gene (TPM2).</title>
        <authorList>
            <person name="Clarke N.F."/>
            <person name="Domazetovska A."/>
            <person name="Waddell L."/>
            <person name="Kornberg A."/>
            <person name="McLean C."/>
            <person name="North K.N."/>
        </authorList>
    </citation>
    <scope>VARIANT CMYO23 GLU-139 DEL</scope>
</reference>
<reference key="21">
    <citation type="journal article" date="2013" name="J. Korean Med. Sci.">
        <title>First Korean family with a mutation in TPM2 associated with Sheldon-Hall syndrome.</title>
        <authorList>
            <person name="Ko J.M."/>
            <person name="Choi I.H."/>
            <person name="Baek G.H."/>
            <person name="Kim K.W."/>
        </authorList>
    </citation>
    <scope>VARIANT DA2B4 TRP-133</scope>
</reference>
<reference key="22">
    <citation type="journal article" date="2014" name="Hum. Mutat.">
        <title>Mutation update and genotype-phenotype correlations of novel and previously described mutations in TPM2 and TPM3 causing congenital myopathies.</title>
        <authorList>
            <person name="Marttila M."/>
            <person name="Lehtokari V.L."/>
            <person name="Marston S."/>
            <person name="Nyman T.A."/>
            <person name="Barnerias C."/>
            <person name="Beggs A.H."/>
            <person name="Bertini E."/>
            <person name="Ceyhan-Birsoy O."/>
            <person name="Cintas P."/>
            <person name="Gerard M."/>
            <person name="Gilbert-Dussardier B."/>
            <person name="Hogue J.S."/>
            <person name="Longman C."/>
            <person name="Eymard B."/>
            <person name="Frydman M."/>
            <person name="Kang P.B."/>
            <person name="Klinge L."/>
            <person name="Kolski H."/>
            <person name="Lochmueller H."/>
            <person name="Magy L."/>
            <person name="Manel V."/>
            <person name="Mayer M."/>
            <person name="Mercuri E."/>
            <person name="North K.N."/>
            <person name="Peudenier-Robert S."/>
            <person name="Pihko H."/>
            <person name="Probst F.J."/>
            <person name="Reisin R."/>
            <person name="Stewart W."/>
            <person name="Taratuto A.L."/>
            <person name="de Visser M."/>
            <person name="Wilichowski E."/>
            <person name="Winer J."/>
            <person name="Nowak K."/>
            <person name="Laing N.G."/>
            <person name="Winder T.L."/>
            <person name="Monnier N."/>
            <person name="Clarke N.F."/>
            <person name="Pelin K."/>
            <person name="Groenholm M."/>
            <person name="Wallgren-Pettersson C."/>
        </authorList>
    </citation>
    <scope>VARIANTS CMYO23 VAL-2; GLY-3; LYS-7 DEL; VAL-14; LYS-41; HIS-93; LYS-117; GLU-128; PRO-133; TRP-133; GLU-139 DEL; PRO-143; PRO-148; THR-155; GLU-218 DEL AND CYS-261</scope>
    <scope>VARIANTS DA1A ARG-93; LYS-117; TRP-133 AND CYS-261</scope>
    <scope>PHOSPHORYLATION AT THR-53; THR-79; THR-108; SER-158; SER-206; THR-252; THR-282 AND SER-283</scope>
</reference>
<reference key="23">
    <citation type="journal article" date="2018" name="BMC Med. Genet.">
        <title>Novel mutations in TPM2 and PIEZO2 are responsible for distal arthrogryposis (DA) 2B and mild DA in two Chinese families.</title>
        <authorList>
            <person name="Li S."/>
            <person name="You Y."/>
            <person name="Gao J."/>
            <person name="Mao B."/>
            <person name="Cao Y."/>
            <person name="Zhao X."/>
            <person name="Zhang X."/>
        </authorList>
    </citation>
    <scope>VARIANT DA2B4 ARG-103</scope>
</reference>
<sequence>MDAIKKKMQMLKLDKENAIDRAEQAEADKKQAEDRCKQLEEEQQALQKKLKGTEDEVEKYSESVKEAQEKLEQAEKKATDAEADVASLNRRIQLVEEELDRAQERLATALQKLEEAEKAADESERGMKVIENRAMKDEEKMELQEMQLKEAKHIAEDSDRKYEEVARKLVILEGELERSEERAEVAESKCGDLEEELKIVTNNLKSLEAQADKYSTKEDKYEEEIKLLEEKLKEAETRAEFAERSVAKLEKTIDDLEDEVYAQKMKYKAISEELDNALNDITSL</sequence>
<protein>
    <recommendedName>
        <fullName>Tropomyosin beta chain</fullName>
    </recommendedName>
    <alternativeName>
        <fullName>Beta-tropomyosin</fullName>
    </alternativeName>
    <alternativeName>
        <fullName>Tropomyosin-2</fullName>
    </alternativeName>
</protein>
<organism>
    <name type="scientific">Homo sapiens</name>
    <name type="common">Human</name>
    <dbReference type="NCBI Taxonomy" id="9606"/>
    <lineage>
        <taxon>Eukaryota</taxon>
        <taxon>Metazoa</taxon>
        <taxon>Chordata</taxon>
        <taxon>Craniata</taxon>
        <taxon>Vertebrata</taxon>
        <taxon>Euteleostomi</taxon>
        <taxon>Mammalia</taxon>
        <taxon>Eutheria</taxon>
        <taxon>Euarchontoglires</taxon>
        <taxon>Primates</taxon>
        <taxon>Haplorrhini</taxon>
        <taxon>Catarrhini</taxon>
        <taxon>Hominidae</taxon>
        <taxon>Homo</taxon>
    </lineage>
</organism>
<feature type="chain" id="PRO_0000205627" description="Tropomyosin beta chain">
    <location>
        <begin position="1"/>
        <end position="284"/>
    </location>
</feature>
<feature type="region of interest" description="Disordered" evidence="7">
    <location>
        <begin position="1"/>
        <end position="65"/>
    </location>
</feature>
<feature type="region of interest" description="Disordered" evidence="7">
    <location>
        <begin position="117"/>
        <end position="136"/>
    </location>
</feature>
<feature type="coiled-coil region" evidence="1">
    <location>
        <begin position="1"/>
        <end position="284"/>
    </location>
</feature>
<feature type="compositionally biased region" description="Basic and acidic residues" evidence="7">
    <location>
        <begin position="12"/>
        <end position="40"/>
    </location>
</feature>
<feature type="compositionally biased region" description="Basic and acidic residues" evidence="7">
    <location>
        <begin position="51"/>
        <end position="65"/>
    </location>
</feature>
<feature type="modified residue" description="N-acetylmethionine" evidence="6">
    <location>
        <position position="1"/>
    </location>
</feature>
<feature type="modified residue" description="Phosphothreonine" evidence="17">
    <location>
        <position position="53"/>
    </location>
</feature>
<feature type="modified residue" description="Phosphoserine; by PIK3CG" evidence="4">
    <location>
        <position position="61"/>
    </location>
</feature>
<feature type="modified residue" description="Phosphothreonine" evidence="17">
    <location>
        <position position="79"/>
    </location>
</feature>
<feature type="modified residue" description="Phosphoserine" evidence="3">
    <location>
        <position position="87"/>
    </location>
</feature>
<feature type="modified residue" description="Phosphothreonine" evidence="17">
    <location>
        <position position="108"/>
    </location>
</feature>
<feature type="modified residue" description="Phosphoserine" evidence="17">
    <location>
        <position position="158"/>
    </location>
</feature>
<feature type="modified residue" description="Phosphoserine" evidence="17">
    <location>
        <position position="206"/>
    </location>
</feature>
<feature type="modified residue" description="Phosphoserine" evidence="5">
    <location>
        <position position="215"/>
    </location>
</feature>
<feature type="modified residue" description="Phosphothreonine" evidence="17">
    <location>
        <position position="252"/>
    </location>
</feature>
<feature type="modified residue" description="Phosphotyrosine" evidence="5">
    <location>
        <position position="261"/>
    </location>
</feature>
<feature type="modified residue" description="Phosphoserine" evidence="5">
    <location>
        <position position="271"/>
    </location>
</feature>
<feature type="modified residue" description="Phosphothreonine" evidence="17">
    <location>
        <position position="282"/>
    </location>
</feature>
<feature type="modified residue" description="Phosphoserine" evidence="17">
    <location>
        <position position="283"/>
    </location>
</feature>
<feature type="splice variant" id="VSP_006594" description="In isoform 3." evidence="24">
    <original>MDAIKKKMQMLKLDKENAIDRAEQAEADKKQAEDRCKQLEEEQQALQKKLKGTEDEVEKYSESVKEAQEKLEQAEKKATD</original>
    <variation>MAGISSIDAVKKKIQSLQQVADEAEERAEHLQREADAERQARER</variation>
    <location>
        <begin position="1"/>
        <end position="80"/>
    </location>
</feature>
<feature type="splice variant" id="VSP_006595" description="In isoform 2 and isoform 3." evidence="20 21 22 23">
    <original>KCGDLEEELKIVTNNLKSLEAQADK</original>
    <variation>RARQLEEELRTMDQALKSLMASEEE</variation>
    <location>
        <begin position="189"/>
        <end position="213"/>
    </location>
</feature>
<feature type="splice variant" id="VSP_006596" description="In isoform 2 and isoform 3." evidence="20 21 22 23">
    <original>DEVYAQKMKYKAISEELDNALNDITSL</original>
    <variation>ETLASAKEENVEIHQTLDQTLLELNNL</variation>
    <location>
        <begin position="258"/>
        <end position="284"/>
    </location>
</feature>
<feature type="sequence variant" id="VAR_071485" description="In CMYO23; likely pathogenic; dbSNP:rs199476145." evidence="17">
    <original>D</original>
    <variation>V</variation>
    <location>
        <position position="2"/>
    </location>
</feature>
<feature type="sequence variant" id="VAR_071486" description="In CMYO23." evidence="17">
    <original>A</original>
    <variation>G</variation>
    <location>
        <position position="3"/>
    </location>
</feature>
<feature type="sequence variant" id="VAR_071487" description="In CMYO23." evidence="17">
    <location>
        <position position="7"/>
    </location>
</feature>
<feature type="sequence variant" id="VAR_071488" description="In CMYO23; dbSNP:rs1825151618." evidence="17">
    <original>D</original>
    <variation>V</variation>
    <location>
        <position position="14"/>
    </location>
</feature>
<feature type="sequence variant" id="VAR_070978" description="In CMYO23; dbSNP:rs137853306." evidence="13 17">
    <original>E</original>
    <variation>K</variation>
    <location>
        <position position="41"/>
    </location>
</feature>
<feature type="sequence variant" id="VAR_070979" description="In CMYO23; dbSNP:rs199476147." evidence="14">
    <location>
        <position position="49"/>
    </location>
</feature>
<feature type="sequence variant" id="VAR_070980" description="In CMYO23." evidence="14">
    <original>G</original>
    <variation>GG</variation>
    <location>
        <position position="52"/>
    </location>
</feature>
<feature type="sequence variant" id="VAR_016086" description="In DA1A; dbSNP:rs104894127." evidence="10">
    <original>R</original>
    <variation>G</variation>
    <location>
        <position position="91"/>
    </location>
</feature>
<feature type="sequence variant" id="VAR_071489" description="In CMYO23; likely pathogenic; dbSNP:rs727504180." evidence="17">
    <original>Q</original>
    <variation>H</variation>
    <location>
        <position position="93"/>
    </location>
</feature>
<feature type="sequence variant" id="VAR_071490" description="In DA1A; dbSNP:rs199476151." evidence="17">
    <original>Q</original>
    <variation>R</variation>
    <location>
        <position position="93"/>
    </location>
</feature>
<feature type="sequence variant" id="VAR_082273" description="In DA2B4; uncertain significance; dbSNP:rs1563929383." evidence="18">
    <original>Q</original>
    <variation>R</variation>
    <location>
        <position position="103"/>
    </location>
</feature>
<feature type="sequence variant" id="VAR_013468" description="In CMYO23." evidence="8">
    <original>E</original>
    <variation>A</variation>
    <location>
        <position position="117"/>
    </location>
</feature>
<feature type="sequence variant" id="VAR_071491" description="In DA1A and CMYO23; dbSNP:rs104894129." evidence="17">
    <original>E</original>
    <variation>K</variation>
    <location>
        <position position="117"/>
    </location>
</feature>
<feature type="sequence variant" id="VAR_071492" description="In CMYO23; likely pathogenic; dbSNP:rs1563929143." evidence="17">
    <original>K</original>
    <variation>E</variation>
    <location>
        <position position="128"/>
    </location>
</feature>
<feature type="sequence variant" id="VAR_071493" description="In CMYO23; likely pathogenic; dbSNP:rs199476152." evidence="17">
    <original>R</original>
    <variation>P</variation>
    <location>
        <position position="133"/>
    </location>
</feature>
<feature type="sequence variant" id="VAR_070981" description="In DA2B4, CMYO23 and DA1A; dbSNP:rs137853305." evidence="11 16 17">
    <original>R</original>
    <variation>W</variation>
    <location>
        <position position="133"/>
    </location>
</feature>
<feature type="sequence variant" id="VAR_070982" description="In CMYO23; dbSNP:rs199476153." evidence="12 15 17">
    <location>
        <position position="139"/>
    </location>
</feature>
<feature type="sequence variant" id="VAR_071494" description="In CMYO23." evidence="17">
    <original>L</original>
    <variation>P</variation>
    <location>
        <position position="143"/>
    </location>
</feature>
<feature type="sequence variant" id="VAR_013469" description="In CMYO23; dbSNP:rs104894128." evidence="8">
    <original>Q</original>
    <variation>P</variation>
    <location>
        <position position="147"/>
    </location>
</feature>
<feature type="sequence variant" id="VAR_071495" description="In CMYO23." evidence="17">
    <original>L</original>
    <variation>P</variation>
    <location>
        <position position="148"/>
    </location>
</feature>
<feature type="sequence variant" id="VAR_071496" description="In CMYO23; likely pathogenic; dbSNP:rs1563929039." evidence="17">
    <original>A</original>
    <variation>T</variation>
    <location>
        <position position="155"/>
    </location>
</feature>
<feature type="sequence variant" id="VAR_070983" description="In CMYO23; dbSNP:rs137853307." evidence="14">
    <original>N</original>
    <variation>K</variation>
    <location>
        <position position="202"/>
    </location>
</feature>
<feature type="sequence variant" id="VAR_071497" description="In CMYO23; likely pathogenic." evidence="17">
    <location>
        <position position="218"/>
    </location>
</feature>
<feature type="sequence variant" id="VAR_071498" description="In DA1A and CMYO23; dbSNP:rs1824676022." evidence="17">
    <original>Y</original>
    <variation>C</variation>
    <location>
        <position position="261"/>
    </location>
</feature>
<feature type="sequence variant" id="VAR_052402" description="In dbSNP:rs3180843.">
    <original>E</original>
    <variation>K</variation>
    <location>
        <position position="273"/>
    </location>
</feature>
<feature type="sequence conflict" description="In Ref. 4; BAD96978." evidence="24" ref="4">
    <original>N</original>
    <variation>S</variation>
    <location>
        <position position="89"/>
    </location>
</feature>
<dbReference type="EMBL" id="M12126">
    <property type="protein sequence ID" value="AAA61229.1"/>
    <property type="molecule type" value="mRNA"/>
</dbReference>
<dbReference type="EMBL" id="M12125">
    <property type="protein sequence ID" value="AAA36773.1"/>
    <property type="molecule type" value="mRNA"/>
</dbReference>
<dbReference type="EMBL" id="X06825">
    <property type="protein sequence ID" value="CAA29971.1"/>
    <property type="molecule type" value="mRNA"/>
</dbReference>
<dbReference type="EMBL" id="M75165">
    <property type="protein sequence ID" value="AAB59509.1"/>
    <property type="molecule type" value="mRNA"/>
</dbReference>
<dbReference type="EMBL" id="M74817">
    <property type="protein sequence ID" value="AAA61230.1"/>
    <property type="molecule type" value="mRNA"/>
</dbReference>
<dbReference type="EMBL" id="AK223258">
    <property type="protein sequence ID" value="BAD96978.1"/>
    <property type="molecule type" value="mRNA"/>
</dbReference>
<dbReference type="EMBL" id="AL133410">
    <property type="status" value="NOT_ANNOTATED_CDS"/>
    <property type="molecule type" value="Genomic_DNA"/>
</dbReference>
<dbReference type="EMBL" id="CH471071">
    <property type="protein sequence ID" value="EAW58354.1"/>
    <property type="molecule type" value="Genomic_DNA"/>
</dbReference>
<dbReference type="EMBL" id="BC011776">
    <property type="protein sequence ID" value="AAH11776.1"/>
    <property type="molecule type" value="mRNA"/>
</dbReference>
<dbReference type="EMBL" id="AF209746">
    <property type="protein sequence ID" value="AAF17621.1"/>
    <property type="molecule type" value="Genomic_DNA"/>
</dbReference>
<dbReference type="EMBL" id="J05247">
    <property type="protein sequence ID" value="AAA51842.1"/>
    <property type="molecule type" value="Genomic_DNA"/>
</dbReference>
<dbReference type="CCDS" id="CCDS6586.1">
    <molecule id="P07951-2"/>
</dbReference>
<dbReference type="CCDS" id="CCDS6587.1">
    <molecule id="P07951-1"/>
</dbReference>
<dbReference type="PIR" id="A23562">
    <property type="entry name" value="A23562"/>
</dbReference>
<dbReference type="PIR" id="S00922">
    <property type="entry name" value="S00922"/>
</dbReference>
<dbReference type="RefSeq" id="NP_003280.2">
    <molecule id="P07951-1"/>
    <property type="nucleotide sequence ID" value="NM_003289.3"/>
</dbReference>
<dbReference type="RefSeq" id="NP_998839.1">
    <molecule id="P07951-2"/>
    <property type="nucleotide sequence ID" value="NM_213674.1"/>
</dbReference>
<dbReference type="RefSeq" id="XP_016870580.1">
    <property type="nucleotide sequence ID" value="XM_017015091.1"/>
</dbReference>
<dbReference type="SMR" id="P07951"/>
<dbReference type="BioGRID" id="113022">
    <property type="interactions" value="233"/>
</dbReference>
<dbReference type="CORUM" id="P07951"/>
<dbReference type="FunCoup" id="P07951">
    <property type="interactions" value="1002"/>
</dbReference>
<dbReference type="IntAct" id="P07951">
    <property type="interactions" value="111"/>
</dbReference>
<dbReference type="MINT" id="P07951"/>
<dbReference type="STRING" id="9606.ENSP00000496494"/>
<dbReference type="GlyGen" id="P07951">
    <property type="glycosylation" value="1 site, 1 O-linked glycan (1 site)"/>
</dbReference>
<dbReference type="iPTMnet" id="P07951"/>
<dbReference type="PhosphoSitePlus" id="P07951"/>
<dbReference type="BioMuta" id="TPM2"/>
<dbReference type="DMDM" id="136090"/>
<dbReference type="REPRODUCTION-2DPAGE" id="IPI00220709"/>
<dbReference type="CPTAC" id="CPTAC-286"/>
<dbReference type="CPTAC" id="CPTAC-287"/>
<dbReference type="jPOST" id="P07951"/>
<dbReference type="MassIVE" id="P07951"/>
<dbReference type="PaxDb" id="9606-ENSP00000367542"/>
<dbReference type="PeptideAtlas" id="P07951"/>
<dbReference type="ProteomicsDB" id="52049">
    <molecule id="P07951-1"/>
</dbReference>
<dbReference type="ProteomicsDB" id="52050">
    <molecule id="P07951-2"/>
</dbReference>
<dbReference type="ProteomicsDB" id="52051">
    <molecule id="P07951-3"/>
</dbReference>
<dbReference type="Pumba" id="P07951"/>
<dbReference type="Antibodypedia" id="25944">
    <property type="antibodies" value="306 antibodies from 30 providers"/>
</dbReference>
<dbReference type="DNASU" id="7169"/>
<dbReference type="Ensembl" id="ENST00000378292.9">
    <molecule id="P07951-2"/>
    <property type="protein sequence ID" value="ENSP00000367542.3"/>
    <property type="gene ID" value="ENSG00000198467.16"/>
</dbReference>
<dbReference type="Ensembl" id="ENST00000645482.3">
    <molecule id="P07951-1"/>
    <property type="protein sequence ID" value="ENSP00000496494.2"/>
    <property type="gene ID" value="ENSG00000198467.16"/>
</dbReference>
<dbReference type="GeneID" id="7169"/>
<dbReference type="KEGG" id="hsa:7169"/>
<dbReference type="MANE-Select" id="ENST00000645482.3">
    <property type="protein sequence ID" value="ENSP00000496494.2"/>
    <property type="RefSeq nucleotide sequence ID" value="NM_003289.4"/>
    <property type="RefSeq protein sequence ID" value="NP_003280.2"/>
</dbReference>
<dbReference type="UCSC" id="uc003zxs.4">
    <molecule id="P07951-1"/>
    <property type="organism name" value="human"/>
</dbReference>
<dbReference type="AGR" id="HGNC:12011"/>
<dbReference type="CTD" id="7169"/>
<dbReference type="DisGeNET" id="7169"/>
<dbReference type="GeneCards" id="TPM2"/>
<dbReference type="HGNC" id="HGNC:12011">
    <property type="gene designation" value="TPM2"/>
</dbReference>
<dbReference type="HPA" id="ENSG00000198467">
    <property type="expression patterns" value="Group enriched (skeletal muscle, tongue)"/>
</dbReference>
<dbReference type="MalaCards" id="TPM2"/>
<dbReference type="MIM" id="108120">
    <property type="type" value="phenotype"/>
</dbReference>
<dbReference type="MIM" id="190990">
    <property type="type" value="gene"/>
</dbReference>
<dbReference type="MIM" id="609285">
    <property type="type" value="phenotype"/>
</dbReference>
<dbReference type="neXtProt" id="NX_P07951"/>
<dbReference type="OpenTargets" id="ENSG00000198467"/>
<dbReference type="Orphanet" id="171881">
    <property type="disease" value="Cap myopathy"/>
</dbReference>
<dbReference type="Orphanet" id="171439">
    <property type="disease" value="Childhood-onset nemaline myopathy"/>
</dbReference>
<dbReference type="Orphanet" id="2020">
    <property type="disease" value="Congenital fiber-type disproportion myopathy"/>
</dbReference>
<dbReference type="Orphanet" id="1146">
    <property type="disease" value="Distal arthrogryposis type 1"/>
</dbReference>
<dbReference type="Orphanet" id="1147">
    <property type="disease" value="Sheldon-Hall syndrome"/>
</dbReference>
<dbReference type="Orphanet" id="171436">
    <property type="disease" value="Typical nemaline myopathy"/>
</dbReference>
<dbReference type="PharmGKB" id="PA36691"/>
<dbReference type="VEuPathDB" id="HostDB:ENSG00000198467"/>
<dbReference type="GeneTree" id="ENSGT01030000234542"/>
<dbReference type="HOGENOM" id="CLU_055027_0_0_1"/>
<dbReference type="InParanoid" id="P07951"/>
<dbReference type="OrthoDB" id="128924at2759"/>
<dbReference type="PAN-GO" id="P07951">
    <property type="GO annotations" value="4 GO annotations based on evolutionary models"/>
</dbReference>
<dbReference type="PhylomeDB" id="P07951"/>
<dbReference type="TreeFam" id="TF351519"/>
<dbReference type="PathwayCommons" id="P07951"/>
<dbReference type="Reactome" id="R-HSA-390522">
    <property type="pathway name" value="Striated Muscle Contraction"/>
</dbReference>
<dbReference type="Reactome" id="R-HSA-445355">
    <property type="pathway name" value="Smooth Muscle Contraction"/>
</dbReference>
<dbReference type="SignaLink" id="P07951"/>
<dbReference type="SIGNOR" id="P07951"/>
<dbReference type="BioGRID-ORCS" id="7169">
    <property type="hits" value="38 hits in 1160 CRISPR screens"/>
</dbReference>
<dbReference type="CD-CODE" id="DEE660B4">
    <property type="entry name" value="Stress granule"/>
</dbReference>
<dbReference type="CD-CODE" id="FB4E32DD">
    <property type="entry name" value="Presynaptic clusters and postsynaptic densities"/>
</dbReference>
<dbReference type="ChiTaRS" id="TPM2">
    <property type="organism name" value="human"/>
</dbReference>
<dbReference type="GeneWiki" id="TPM2"/>
<dbReference type="GenomeRNAi" id="7169"/>
<dbReference type="Pharos" id="P07951">
    <property type="development level" value="Tbio"/>
</dbReference>
<dbReference type="PRO" id="PR:P07951"/>
<dbReference type="Proteomes" id="UP000005640">
    <property type="component" value="Chromosome 9"/>
</dbReference>
<dbReference type="RNAct" id="P07951">
    <property type="molecule type" value="protein"/>
</dbReference>
<dbReference type="Bgee" id="ENSG00000198467">
    <property type="expression patterns" value="Expressed in saphenous vein and 198 other cell types or tissues"/>
</dbReference>
<dbReference type="ExpressionAtlas" id="P07951">
    <property type="expression patterns" value="baseline and differential"/>
</dbReference>
<dbReference type="GO" id="GO:0015629">
    <property type="term" value="C:actin cytoskeleton"/>
    <property type="evidence" value="ECO:0000250"/>
    <property type="project" value="UniProtKB"/>
</dbReference>
<dbReference type="GO" id="GO:0005884">
    <property type="term" value="C:actin filament"/>
    <property type="evidence" value="ECO:0000318"/>
    <property type="project" value="GO_Central"/>
</dbReference>
<dbReference type="GO" id="GO:0005829">
    <property type="term" value="C:cytosol"/>
    <property type="evidence" value="ECO:0000304"/>
    <property type="project" value="Reactome"/>
</dbReference>
<dbReference type="GO" id="GO:0005862">
    <property type="term" value="C:muscle thin filament tropomyosin"/>
    <property type="evidence" value="ECO:0000304"/>
    <property type="project" value="ProtInc"/>
</dbReference>
<dbReference type="GO" id="GO:0003779">
    <property type="term" value="F:actin binding"/>
    <property type="evidence" value="ECO:0000314"/>
    <property type="project" value="UniProtKB"/>
</dbReference>
<dbReference type="GO" id="GO:0051015">
    <property type="term" value="F:actin filament binding"/>
    <property type="evidence" value="ECO:0000250"/>
    <property type="project" value="UniProtKB"/>
</dbReference>
<dbReference type="GO" id="GO:0042802">
    <property type="term" value="F:identical protein binding"/>
    <property type="evidence" value="ECO:0000353"/>
    <property type="project" value="IntAct"/>
</dbReference>
<dbReference type="GO" id="GO:0046982">
    <property type="term" value="F:protein heterodimerization activity"/>
    <property type="evidence" value="ECO:0000250"/>
    <property type="project" value="UniProtKB"/>
</dbReference>
<dbReference type="GO" id="GO:0042803">
    <property type="term" value="F:protein homodimerization activity"/>
    <property type="evidence" value="ECO:0000250"/>
    <property type="project" value="UniProtKB"/>
</dbReference>
<dbReference type="GO" id="GO:0008307">
    <property type="term" value="F:structural constituent of muscle"/>
    <property type="evidence" value="ECO:0000304"/>
    <property type="project" value="ProtInc"/>
</dbReference>
<dbReference type="GO" id="GO:0007015">
    <property type="term" value="P:actin filament organization"/>
    <property type="evidence" value="ECO:0000318"/>
    <property type="project" value="GO_Central"/>
</dbReference>
<dbReference type="GO" id="GO:0006936">
    <property type="term" value="P:muscle contraction"/>
    <property type="evidence" value="ECO:0000318"/>
    <property type="project" value="GO_Central"/>
</dbReference>
<dbReference type="GO" id="GO:0043462">
    <property type="term" value="P:regulation of ATP-dependent activity"/>
    <property type="evidence" value="ECO:0000314"/>
    <property type="project" value="UniProtKB"/>
</dbReference>
<dbReference type="FunFam" id="1.20.5.1160:FF:000013">
    <property type="entry name" value="Tropomyosin 1 (alpha)"/>
    <property type="match status" value="1"/>
</dbReference>
<dbReference type="FunFam" id="1.20.5.170:FF:000005">
    <property type="entry name" value="Tropomyosin alpha-1 chain"/>
    <property type="match status" value="1"/>
</dbReference>
<dbReference type="FunFam" id="1.20.5.170:FF:000001">
    <property type="entry name" value="Tropomyosin alpha-1 chain isoform 1"/>
    <property type="match status" value="1"/>
</dbReference>
<dbReference type="FunFam" id="1.20.5.340:FF:000001">
    <property type="entry name" value="Tropomyosin alpha-1 chain isoform 2"/>
    <property type="match status" value="1"/>
</dbReference>
<dbReference type="Gene3D" id="1.20.5.170">
    <property type="match status" value="2"/>
</dbReference>
<dbReference type="Gene3D" id="1.20.5.340">
    <property type="match status" value="1"/>
</dbReference>
<dbReference type="InterPro" id="IPR000533">
    <property type="entry name" value="Tropomyosin"/>
</dbReference>
<dbReference type="PANTHER" id="PTHR19269">
    <property type="entry name" value="TROPOMYOSIN"/>
    <property type="match status" value="1"/>
</dbReference>
<dbReference type="Pfam" id="PF00261">
    <property type="entry name" value="Tropomyosin"/>
    <property type="match status" value="1"/>
</dbReference>
<dbReference type="PRINTS" id="PR00194">
    <property type="entry name" value="TROPOMYOSIN"/>
</dbReference>
<dbReference type="SUPFAM" id="SSF57997">
    <property type="entry name" value="Tropomyosin"/>
    <property type="match status" value="1"/>
</dbReference>
<dbReference type="PROSITE" id="PS00326">
    <property type="entry name" value="TROPOMYOSIN"/>
    <property type="match status" value="1"/>
</dbReference>
<name>TPM2_HUMAN</name>
<proteinExistence type="evidence at protein level"/>
<keyword id="KW-0007">Acetylation</keyword>
<keyword id="KW-0009">Actin-binding</keyword>
<keyword id="KW-0025">Alternative splicing</keyword>
<keyword id="KW-0175">Coiled coil</keyword>
<keyword id="KW-0963">Cytoplasm</keyword>
<keyword id="KW-0206">Cytoskeleton</keyword>
<keyword id="KW-0903">Direct protein sequencing</keyword>
<keyword id="KW-0225">Disease variant</keyword>
<keyword id="KW-0514">Muscle protein</keyword>
<keyword id="KW-1057">Nemaline myopathy</keyword>
<keyword id="KW-0597">Phosphoprotein</keyword>
<keyword id="KW-1267">Proteomics identification</keyword>
<keyword id="KW-1185">Reference proteome</keyword>